<name>EFTU2_METFK</name>
<gene>
    <name evidence="2" type="primary">tuf2</name>
    <name type="ordered locus">Mfla_0277</name>
</gene>
<reference key="1">
    <citation type="submission" date="2006-03" db="EMBL/GenBank/DDBJ databases">
        <title>Complete sequence of Methylobacillus flagellatus KT.</title>
        <authorList>
            <consortium name="US DOE Joint Genome Institute"/>
            <person name="Copeland A."/>
            <person name="Lucas S."/>
            <person name="Lapidus A."/>
            <person name="Barry K."/>
            <person name="Detter J.C."/>
            <person name="Glavina del Rio T."/>
            <person name="Hammon N."/>
            <person name="Israni S."/>
            <person name="Dalin E."/>
            <person name="Tice H."/>
            <person name="Pitluck S."/>
            <person name="Brettin T."/>
            <person name="Bruce D."/>
            <person name="Han C."/>
            <person name="Tapia R."/>
            <person name="Saunders E."/>
            <person name="Gilna P."/>
            <person name="Schmutz J."/>
            <person name="Larimer F."/>
            <person name="Land M."/>
            <person name="Kyrpides N."/>
            <person name="Anderson I."/>
            <person name="Richardson P."/>
        </authorList>
    </citation>
    <scope>NUCLEOTIDE SEQUENCE [LARGE SCALE GENOMIC DNA]</scope>
    <source>
        <strain>ATCC 51484 / DSM 6875 / VKM B-1610 / KT</strain>
    </source>
</reference>
<organism>
    <name type="scientific">Methylobacillus flagellatus (strain ATCC 51484 / DSM 6875 / VKM B-1610 / KT)</name>
    <dbReference type="NCBI Taxonomy" id="265072"/>
    <lineage>
        <taxon>Bacteria</taxon>
        <taxon>Pseudomonadati</taxon>
        <taxon>Pseudomonadota</taxon>
        <taxon>Betaproteobacteria</taxon>
        <taxon>Nitrosomonadales</taxon>
        <taxon>Methylophilaceae</taxon>
        <taxon>Methylobacillus</taxon>
    </lineage>
</organism>
<comment type="function">
    <text evidence="2">GTP hydrolase that promotes the GTP-dependent binding of aminoacyl-tRNA to the A-site of ribosomes during protein biosynthesis.</text>
</comment>
<comment type="catalytic activity">
    <reaction evidence="2">
        <text>GTP + H2O = GDP + phosphate + H(+)</text>
        <dbReference type="Rhea" id="RHEA:19669"/>
        <dbReference type="ChEBI" id="CHEBI:15377"/>
        <dbReference type="ChEBI" id="CHEBI:15378"/>
        <dbReference type="ChEBI" id="CHEBI:37565"/>
        <dbReference type="ChEBI" id="CHEBI:43474"/>
        <dbReference type="ChEBI" id="CHEBI:58189"/>
        <dbReference type="EC" id="3.6.5.3"/>
    </reaction>
    <physiologicalReaction direction="left-to-right" evidence="2">
        <dbReference type="Rhea" id="RHEA:19670"/>
    </physiologicalReaction>
</comment>
<comment type="subunit">
    <text evidence="2">Monomer.</text>
</comment>
<comment type="subcellular location">
    <subcellularLocation>
        <location evidence="2">Cytoplasm</location>
    </subcellularLocation>
</comment>
<comment type="similarity">
    <text evidence="2">Belongs to the TRAFAC class translation factor GTPase superfamily. Classic translation factor GTPase family. EF-Tu/EF-1A subfamily.</text>
</comment>
<protein>
    <recommendedName>
        <fullName evidence="2">Elongation factor Tu 2</fullName>
        <shortName evidence="2">EF-Tu 2</shortName>
        <ecNumber evidence="2">3.6.5.3</ecNumber>
    </recommendedName>
</protein>
<accession>Q1H4N9</accession>
<dbReference type="EC" id="3.6.5.3" evidence="2"/>
<dbReference type="EMBL" id="CP000284">
    <property type="protein sequence ID" value="ABE48548.1"/>
    <property type="molecule type" value="Genomic_DNA"/>
</dbReference>
<dbReference type="RefSeq" id="WP_011478645.1">
    <property type="nucleotide sequence ID" value="NC_007947.1"/>
</dbReference>
<dbReference type="SMR" id="Q1H4N9"/>
<dbReference type="STRING" id="265072.Mfla_0277"/>
<dbReference type="KEGG" id="mfa:Mfla_0277"/>
<dbReference type="eggNOG" id="COG0050">
    <property type="taxonomic scope" value="Bacteria"/>
</dbReference>
<dbReference type="HOGENOM" id="CLU_007265_0_0_4"/>
<dbReference type="OrthoDB" id="9803139at2"/>
<dbReference type="Proteomes" id="UP000002440">
    <property type="component" value="Chromosome"/>
</dbReference>
<dbReference type="GO" id="GO:0005829">
    <property type="term" value="C:cytosol"/>
    <property type="evidence" value="ECO:0007669"/>
    <property type="project" value="TreeGrafter"/>
</dbReference>
<dbReference type="GO" id="GO:0005525">
    <property type="term" value="F:GTP binding"/>
    <property type="evidence" value="ECO:0007669"/>
    <property type="project" value="UniProtKB-UniRule"/>
</dbReference>
<dbReference type="GO" id="GO:0003924">
    <property type="term" value="F:GTPase activity"/>
    <property type="evidence" value="ECO:0007669"/>
    <property type="project" value="InterPro"/>
</dbReference>
<dbReference type="GO" id="GO:0097216">
    <property type="term" value="F:guanosine tetraphosphate binding"/>
    <property type="evidence" value="ECO:0007669"/>
    <property type="project" value="UniProtKB-ARBA"/>
</dbReference>
<dbReference type="GO" id="GO:0003746">
    <property type="term" value="F:translation elongation factor activity"/>
    <property type="evidence" value="ECO:0007669"/>
    <property type="project" value="UniProtKB-UniRule"/>
</dbReference>
<dbReference type="CDD" id="cd01884">
    <property type="entry name" value="EF_Tu"/>
    <property type="match status" value="1"/>
</dbReference>
<dbReference type="CDD" id="cd03697">
    <property type="entry name" value="EFTU_II"/>
    <property type="match status" value="1"/>
</dbReference>
<dbReference type="CDD" id="cd03707">
    <property type="entry name" value="EFTU_III"/>
    <property type="match status" value="1"/>
</dbReference>
<dbReference type="FunFam" id="2.40.30.10:FF:000001">
    <property type="entry name" value="Elongation factor Tu"/>
    <property type="match status" value="1"/>
</dbReference>
<dbReference type="FunFam" id="3.40.50.300:FF:000003">
    <property type="entry name" value="Elongation factor Tu"/>
    <property type="match status" value="1"/>
</dbReference>
<dbReference type="Gene3D" id="3.40.50.300">
    <property type="entry name" value="P-loop containing nucleotide triphosphate hydrolases"/>
    <property type="match status" value="1"/>
</dbReference>
<dbReference type="Gene3D" id="2.40.30.10">
    <property type="entry name" value="Translation factors"/>
    <property type="match status" value="2"/>
</dbReference>
<dbReference type="HAMAP" id="MF_00118_B">
    <property type="entry name" value="EF_Tu_B"/>
    <property type="match status" value="1"/>
</dbReference>
<dbReference type="InterPro" id="IPR041709">
    <property type="entry name" value="EF-Tu_GTP-bd"/>
</dbReference>
<dbReference type="InterPro" id="IPR050055">
    <property type="entry name" value="EF-Tu_GTPase"/>
</dbReference>
<dbReference type="InterPro" id="IPR004161">
    <property type="entry name" value="EFTu-like_2"/>
</dbReference>
<dbReference type="InterPro" id="IPR033720">
    <property type="entry name" value="EFTU_2"/>
</dbReference>
<dbReference type="InterPro" id="IPR031157">
    <property type="entry name" value="G_TR_CS"/>
</dbReference>
<dbReference type="InterPro" id="IPR027417">
    <property type="entry name" value="P-loop_NTPase"/>
</dbReference>
<dbReference type="InterPro" id="IPR005225">
    <property type="entry name" value="Small_GTP-bd"/>
</dbReference>
<dbReference type="InterPro" id="IPR000795">
    <property type="entry name" value="T_Tr_GTP-bd_dom"/>
</dbReference>
<dbReference type="InterPro" id="IPR009000">
    <property type="entry name" value="Transl_B-barrel_sf"/>
</dbReference>
<dbReference type="InterPro" id="IPR009001">
    <property type="entry name" value="Transl_elong_EF1A/Init_IF2_C"/>
</dbReference>
<dbReference type="InterPro" id="IPR004541">
    <property type="entry name" value="Transl_elong_EFTu/EF1A_bac/org"/>
</dbReference>
<dbReference type="InterPro" id="IPR004160">
    <property type="entry name" value="Transl_elong_EFTu/EF1A_C"/>
</dbReference>
<dbReference type="NCBIfam" id="TIGR00485">
    <property type="entry name" value="EF-Tu"/>
    <property type="match status" value="1"/>
</dbReference>
<dbReference type="NCBIfam" id="NF000766">
    <property type="entry name" value="PRK00049.1"/>
    <property type="match status" value="1"/>
</dbReference>
<dbReference type="NCBIfam" id="NF009372">
    <property type="entry name" value="PRK12735.1"/>
    <property type="match status" value="1"/>
</dbReference>
<dbReference type="NCBIfam" id="NF009373">
    <property type="entry name" value="PRK12736.1"/>
    <property type="match status" value="1"/>
</dbReference>
<dbReference type="NCBIfam" id="TIGR00231">
    <property type="entry name" value="small_GTP"/>
    <property type="match status" value="1"/>
</dbReference>
<dbReference type="PANTHER" id="PTHR43721:SF22">
    <property type="entry name" value="ELONGATION FACTOR TU, MITOCHONDRIAL"/>
    <property type="match status" value="1"/>
</dbReference>
<dbReference type="PANTHER" id="PTHR43721">
    <property type="entry name" value="ELONGATION FACTOR TU-RELATED"/>
    <property type="match status" value="1"/>
</dbReference>
<dbReference type="Pfam" id="PF00009">
    <property type="entry name" value="GTP_EFTU"/>
    <property type="match status" value="1"/>
</dbReference>
<dbReference type="Pfam" id="PF03144">
    <property type="entry name" value="GTP_EFTU_D2"/>
    <property type="match status" value="1"/>
</dbReference>
<dbReference type="Pfam" id="PF03143">
    <property type="entry name" value="GTP_EFTU_D3"/>
    <property type="match status" value="1"/>
</dbReference>
<dbReference type="PRINTS" id="PR00315">
    <property type="entry name" value="ELONGATNFCT"/>
</dbReference>
<dbReference type="SUPFAM" id="SSF50465">
    <property type="entry name" value="EF-Tu/eEF-1alpha/eIF2-gamma C-terminal domain"/>
    <property type="match status" value="1"/>
</dbReference>
<dbReference type="SUPFAM" id="SSF52540">
    <property type="entry name" value="P-loop containing nucleoside triphosphate hydrolases"/>
    <property type="match status" value="1"/>
</dbReference>
<dbReference type="SUPFAM" id="SSF50447">
    <property type="entry name" value="Translation proteins"/>
    <property type="match status" value="1"/>
</dbReference>
<dbReference type="PROSITE" id="PS00301">
    <property type="entry name" value="G_TR_1"/>
    <property type="match status" value="1"/>
</dbReference>
<dbReference type="PROSITE" id="PS51722">
    <property type="entry name" value="G_TR_2"/>
    <property type="match status" value="1"/>
</dbReference>
<feature type="chain" id="PRO_0000337433" description="Elongation factor Tu 2">
    <location>
        <begin position="1"/>
        <end position="396"/>
    </location>
</feature>
<feature type="domain" description="tr-type G">
    <location>
        <begin position="10"/>
        <end position="206"/>
    </location>
</feature>
<feature type="region of interest" description="G1" evidence="1">
    <location>
        <begin position="19"/>
        <end position="26"/>
    </location>
</feature>
<feature type="region of interest" description="G2" evidence="1">
    <location>
        <begin position="60"/>
        <end position="64"/>
    </location>
</feature>
<feature type="region of interest" description="G3" evidence="1">
    <location>
        <begin position="81"/>
        <end position="84"/>
    </location>
</feature>
<feature type="region of interest" description="G4" evidence="1">
    <location>
        <begin position="136"/>
        <end position="139"/>
    </location>
</feature>
<feature type="region of interest" description="G5" evidence="1">
    <location>
        <begin position="174"/>
        <end position="176"/>
    </location>
</feature>
<feature type="binding site" evidence="2">
    <location>
        <begin position="19"/>
        <end position="26"/>
    </location>
    <ligand>
        <name>GTP</name>
        <dbReference type="ChEBI" id="CHEBI:37565"/>
    </ligand>
</feature>
<feature type="binding site" evidence="2">
    <location>
        <position position="26"/>
    </location>
    <ligand>
        <name>Mg(2+)</name>
        <dbReference type="ChEBI" id="CHEBI:18420"/>
    </ligand>
</feature>
<feature type="binding site" evidence="2">
    <location>
        <begin position="81"/>
        <end position="85"/>
    </location>
    <ligand>
        <name>GTP</name>
        <dbReference type="ChEBI" id="CHEBI:37565"/>
    </ligand>
</feature>
<feature type="binding site" evidence="2">
    <location>
        <begin position="136"/>
        <end position="139"/>
    </location>
    <ligand>
        <name>GTP</name>
        <dbReference type="ChEBI" id="CHEBI:37565"/>
    </ligand>
</feature>
<proteinExistence type="inferred from homology"/>
<evidence type="ECO:0000250" key="1"/>
<evidence type="ECO:0000255" key="2">
    <source>
        <dbReference type="HAMAP-Rule" id="MF_00118"/>
    </source>
</evidence>
<sequence length="396" mass="42950">MAKGKFERTKPHVNVGTIGHVDHGKTTLTAAITTVLTKKFGGEAKDYSQIDNAPEERARGITINTSHVEYETETRHYAHVDCPGHADYVKNMITGAAQMDGAILVVSAADGPMPQTREHILLARQVGVPYIIVFLNKADMVDDAELLELVEMEVRELLSKYDFPGDDTPIIKGSAKLALEGDQSDIGEPAIFRLAEALDTYIPTPERAVDGTFLMPVEDVFSISGRGTVVTGRVERGIVKVGDEIEIVGLKPTIKTTCTGVEMFRKLLDQGQAGDNVGVLLRGTKREEVERGQVLAKVGSIKPHTKFTAEIYVLGKDEGGRHTPFFNGYRPQFYFRTTDVTGAVELPAGTEMVMPGDNVSISVSLIAPIAMEEGLRFAIREGGRTVGAGVVAKIIE</sequence>
<keyword id="KW-0963">Cytoplasm</keyword>
<keyword id="KW-0251">Elongation factor</keyword>
<keyword id="KW-0342">GTP-binding</keyword>
<keyword id="KW-0378">Hydrolase</keyword>
<keyword id="KW-0460">Magnesium</keyword>
<keyword id="KW-0479">Metal-binding</keyword>
<keyword id="KW-0547">Nucleotide-binding</keyword>
<keyword id="KW-0648">Protein biosynthesis</keyword>
<keyword id="KW-1185">Reference proteome</keyword>